<accession>Q57694</accession>
<gene>
    <name type="ordered locus">MJ0243</name>
</gene>
<proteinExistence type="inferred from homology"/>
<feature type="chain" id="PRO_0000105359" description="Probable glutamyl-tRNA(Gln) amidotransferase subunit C">
    <location>
        <begin position="1"/>
        <end position="82"/>
    </location>
</feature>
<name>GATC_METJA</name>
<keyword id="KW-0067">ATP-binding</keyword>
<keyword id="KW-0436">Ligase</keyword>
<keyword id="KW-0547">Nucleotide-binding</keyword>
<keyword id="KW-0648">Protein biosynthesis</keyword>
<keyword id="KW-1185">Reference proteome</keyword>
<reference key="1">
    <citation type="journal article" date="1996" name="Science">
        <title>Complete genome sequence of the methanogenic archaeon, Methanococcus jannaschii.</title>
        <authorList>
            <person name="Bult C.J."/>
            <person name="White O."/>
            <person name="Olsen G.J."/>
            <person name="Zhou L."/>
            <person name="Fleischmann R.D."/>
            <person name="Sutton G.G."/>
            <person name="Blake J.A."/>
            <person name="FitzGerald L.M."/>
            <person name="Clayton R.A."/>
            <person name="Gocayne J.D."/>
            <person name="Kerlavage A.R."/>
            <person name="Dougherty B.A."/>
            <person name="Tomb J.-F."/>
            <person name="Adams M.D."/>
            <person name="Reich C.I."/>
            <person name="Overbeek R."/>
            <person name="Kirkness E.F."/>
            <person name="Weinstock K.G."/>
            <person name="Merrick J.M."/>
            <person name="Glodek A."/>
            <person name="Scott J.L."/>
            <person name="Geoghagen N.S.M."/>
            <person name="Weidman J.F."/>
            <person name="Fuhrmann J.L."/>
            <person name="Nguyen D."/>
            <person name="Utterback T.R."/>
            <person name="Kelley J.M."/>
            <person name="Peterson J.D."/>
            <person name="Sadow P.W."/>
            <person name="Hanna M.C."/>
            <person name="Cotton M.D."/>
            <person name="Roberts K.M."/>
            <person name="Hurst M.A."/>
            <person name="Kaine B.P."/>
            <person name="Borodovsky M."/>
            <person name="Klenk H.-P."/>
            <person name="Fraser C.M."/>
            <person name="Smith H.O."/>
            <person name="Woese C.R."/>
            <person name="Venter J.C."/>
        </authorList>
    </citation>
    <scope>NUCLEOTIDE SEQUENCE [LARGE SCALE GENOMIC DNA]</scope>
    <source>
        <strain>ATCC 43067 / DSM 2661 / JAL-1 / JCM 10045 / NBRC 100440</strain>
    </source>
</reference>
<sequence length="82" mass="9786">MDEKTIEKIKKEAEEIINKFSEVLEKFNLEMEESYYIIDTRNVLREDEAVESNPEFREKFLKIAPKVNKEGYVVVEKGSWLK</sequence>
<protein>
    <recommendedName>
        <fullName>Probable glutamyl-tRNA(Gln) amidotransferase subunit C</fullName>
        <shortName>Glu-ADT subunit C</shortName>
        <ecNumber>6.3.5.-</ecNumber>
    </recommendedName>
</protein>
<evidence type="ECO:0000250" key="1"/>
<evidence type="ECO:0000305" key="2"/>
<organism>
    <name type="scientific">Methanocaldococcus jannaschii (strain ATCC 43067 / DSM 2661 / JAL-1 / JCM 10045 / NBRC 100440)</name>
    <name type="common">Methanococcus jannaschii</name>
    <dbReference type="NCBI Taxonomy" id="243232"/>
    <lineage>
        <taxon>Archaea</taxon>
        <taxon>Methanobacteriati</taxon>
        <taxon>Methanobacteriota</taxon>
        <taxon>Methanomada group</taxon>
        <taxon>Methanococci</taxon>
        <taxon>Methanococcales</taxon>
        <taxon>Methanocaldococcaceae</taxon>
        <taxon>Methanocaldococcus</taxon>
    </lineage>
</organism>
<comment type="function">
    <text evidence="1">Allows the formation of correctly charged Asn-tRNA(Asn) or Gln-tRNA(Gln) through the transamidation of misacylated Asp-tRNA(Asn) or Glu-tRNA(Gln) in organisms which lack either or both of asparaginyl-tRNA or glutaminyl-tRNA synthetases. The reaction takes place in the presence of glutamine and ATP through an activated phospho-Asp-tRNA(Asn) or phospho-Glu-tRNA(Gln) (By similarity).</text>
</comment>
<comment type="catalytic activity">
    <reaction>
        <text>L-glutamyl-tRNA(Gln) + L-glutamine + ATP + H2O = L-glutaminyl-tRNA(Gln) + L-glutamate + ADP + phosphate + H(+)</text>
        <dbReference type="Rhea" id="RHEA:17521"/>
        <dbReference type="Rhea" id="RHEA-COMP:9681"/>
        <dbReference type="Rhea" id="RHEA-COMP:9684"/>
        <dbReference type="ChEBI" id="CHEBI:15377"/>
        <dbReference type="ChEBI" id="CHEBI:15378"/>
        <dbReference type="ChEBI" id="CHEBI:29985"/>
        <dbReference type="ChEBI" id="CHEBI:30616"/>
        <dbReference type="ChEBI" id="CHEBI:43474"/>
        <dbReference type="ChEBI" id="CHEBI:58359"/>
        <dbReference type="ChEBI" id="CHEBI:78520"/>
        <dbReference type="ChEBI" id="CHEBI:78521"/>
        <dbReference type="ChEBI" id="CHEBI:456216"/>
    </reaction>
</comment>
<comment type="catalytic activity">
    <reaction>
        <text>L-aspartyl-tRNA(Asn) + L-glutamine + ATP + H2O = L-asparaginyl-tRNA(Asn) + L-glutamate + ADP + phosphate + 2 H(+)</text>
        <dbReference type="Rhea" id="RHEA:14513"/>
        <dbReference type="Rhea" id="RHEA-COMP:9674"/>
        <dbReference type="Rhea" id="RHEA-COMP:9677"/>
        <dbReference type="ChEBI" id="CHEBI:15377"/>
        <dbReference type="ChEBI" id="CHEBI:15378"/>
        <dbReference type="ChEBI" id="CHEBI:29985"/>
        <dbReference type="ChEBI" id="CHEBI:30616"/>
        <dbReference type="ChEBI" id="CHEBI:43474"/>
        <dbReference type="ChEBI" id="CHEBI:58359"/>
        <dbReference type="ChEBI" id="CHEBI:78515"/>
        <dbReference type="ChEBI" id="CHEBI:78516"/>
        <dbReference type="ChEBI" id="CHEBI:456216"/>
    </reaction>
</comment>
<comment type="subunit">
    <text evidence="1">Heterotrimer of A, B and C subunits.</text>
</comment>
<comment type="similarity">
    <text evidence="2">Belongs to the GatC family.</text>
</comment>
<dbReference type="EC" id="6.3.5.-"/>
<dbReference type="EMBL" id="L77117">
    <property type="protein sequence ID" value="AAB98231.1"/>
    <property type="molecule type" value="Genomic_DNA"/>
</dbReference>
<dbReference type="PIR" id="D64330">
    <property type="entry name" value="D64330"/>
</dbReference>
<dbReference type="RefSeq" id="WP_010869741.1">
    <property type="nucleotide sequence ID" value="NC_000909.1"/>
</dbReference>
<dbReference type="SMR" id="Q57694"/>
<dbReference type="FunCoup" id="Q57694">
    <property type="interactions" value="28"/>
</dbReference>
<dbReference type="STRING" id="243232.MJ_0243"/>
<dbReference type="PaxDb" id="243232-MJ_0243"/>
<dbReference type="EnsemblBacteria" id="AAB98231">
    <property type="protein sequence ID" value="AAB98231"/>
    <property type="gene ID" value="MJ_0243"/>
</dbReference>
<dbReference type="GeneID" id="1451097"/>
<dbReference type="KEGG" id="mja:MJ_0243"/>
<dbReference type="eggNOG" id="arCOG02726">
    <property type="taxonomic scope" value="Archaea"/>
</dbReference>
<dbReference type="HOGENOM" id="CLU_196465_0_0_2"/>
<dbReference type="InParanoid" id="Q57694"/>
<dbReference type="OrthoDB" id="64808at2157"/>
<dbReference type="Proteomes" id="UP000000805">
    <property type="component" value="Chromosome"/>
</dbReference>
<dbReference type="GO" id="GO:0050566">
    <property type="term" value="F:asparaginyl-tRNA synthase (glutamine-hydrolyzing) activity"/>
    <property type="evidence" value="ECO:0007669"/>
    <property type="project" value="RHEA"/>
</dbReference>
<dbReference type="GO" id="GO:0005524">
    <property type="term" value="F:ATP binding"/>
    <property type="evidence" value="ECO:0007669"/>
    <property type="project" value="UniProtKB-KW"/>
</dbReference>
<dbReference type="GO" id="GO:0050567">
    <property type="term" value="F:glutaminyl-tRNA synthase (glutamine-hydrolyzing) activity"/>
    <property type="evidence" value="ECO:0007669"/>
    <property type="project" value="RHEA"/>
</dbReference>
<dbReference type="GO" id="GO:0006450">
    <property type="term" value="P:regulation of translational fidelity"/>
    <property type="evidence" value="ECO:0007669"/>
    <property type="project" value="InterPro"/>
</dbReference>
<dbReference type="GO" id="GO:0006412">
    <property type="term" value="P:translation"/>
    <property type="evidence" value="ECO:0007669"/>
    <property type="project" value="UniProtKB-KW"/>
</dbReference>
<dbReference type="InterPro" id="IPR036113">
    <property type="entry name" value="Asp/Glu-ADT_sf_sub_c"/>
</dbReference>
<dbReference type="InterPro" id="IPR003837">
    <property type="entry name" value="GatC"/>
</dbReference>
<dbReference type="InterPro" id="IPR010120">
    <property type="entry name" value="Glu-ADT_subunit_C_archaea"/>
</dbReference>
<dbReference type="NCBIfam" id="TIGR01827">
    <property type="entry name" value="gatC_rel"/>
    <property type="match status" value="1"/>
</dbReference>
<dbReference type="NCBIfam" id="NF000681">
    <property type="entry name" value="PRK00034.3-1"/>
    <property type="match status" value="1"/>
</dbReference>
<dbReference type="Pfam" id="PF02686">
    <property type="entry name" value="GatC"/>
    <property type="match status" value="1"/>
</dbReference>
<dbReference type="SUPFAM" id="SSF141000">
    <property type="entry name" value="Glu-tRNAGln amidotransferase C subunit"/>
    <property type="match status" value="1"/>
</dbReference>